<keyword id="KW-0997">Cell inner membrane</keyword>
<keyword id="KW-1003">Cell membrane</keyword>
<keyword id="KW-0472">Membrane</keyword>
<keyword id="KW-0520">NAD</keyword>
<keyword id="KW-0874">Quinone</keyword>
<keyword id="KW-1278">Translocase</keyword>
<keyword id="KW-0813">Transport</keyword>
<keyword id="KW-0830">Ubiquinone</keyword>
<gene>
    <name evidence="1" type="primary">nuoD</name>
    <name type="ordered locus">APH_0732</name>
</gene>
<reference key="1">
    <citation type="journal article" date="2006" name="PLoS Genet.">
        <title>Comparative genomics of emerging human ehrlichiosis agents.</title>
        <authorList>
            <person name="Dunning Hotopp J.C."/>
            <person name="Lin M."/>
            <person name="Madupu R."/>
            <person name="Crabtree J."/>
            <person name="Angiuoli S.V."/>
            <person name="Eisen J.A."/>
            <person name="Seshadri R."/>
            <person name="Ren Q."/>
            <person name="Wu M."/>
            <person name="Utterback T.R."/>
            <person name="Smith S."/>
            <person name="Lewis M."/>
            <person name="Khouri H."/>
            <person name="Zhang C."/>
            <person name="Niu H."/>
            <person name="Lin Q."/>
            <person name="Ohashi N."/>
            <person name="Zhi N."/>
            <person name="Nelson W.C."/>
            <person name="Brinkac L.M."/>
            <person name="Dodson R.J."/>
            <person name="Rosovitz M.J."/>
            <person name="Sundaram J.P."/>
            <person name="Daugherty S.C."/>
            <person name="Davidsen T."/>
            <person name="Durkin A.S."/>
            <person name="Gwinn M.L."/>
            <person name="Haft D.H."/>
            <person name="Selengut J.D."/>
            <person name="Sullivan S.A."/>
            <person name="Zafar N."/>
            <person name="Zhou L."/>
            <person name="Benahmed F."/>
            <person name="Forberger H."/>
            <person name="Halpin R."/>
            <person name="Mulligan S."/>
            <person name="Robinson J."/>
            <person name="White O."/>
            <person name="Rikihisa Y."/>
            <person name="Tettelin H."/>
        </authorList>
    </citation>
    <scope>NUCLEOTIDE SEQUENCE [LARGE SCALE GENOMIC DNA]</scope>
    <source>
        <strain>HZ</strain>
    </source>
</reference>
<accession>Q2GJY9</accession>
<dbReference type="EC" id="7.1.1.-" evidence="1"/>
<dbReference type="EMBL" id="CP000235">
    <property type="protein sequence ID" value="ABD43804.1"/>
    <property type="molecule type" value="Genomic_DNA"/>
</dbReference>
<dbReference type="RefSeq" id="WP_011450833.1">
    <property type="nucleotide sequence ID" value="NC_007797.1"/>
</dbReference>
<dbReference type="SMR" id="Q2GJY9"/>
<dbReference type="STRING" id="212042.APH_0732"/>
<dbReference type="PaxDb" id="212042-APH_0732"/>
<dbReference type="EnsemblBacteria" id="ABD43804">
    <property type="protein sequence ID" value="ABD43804"/>
    <property type="gene ID" value="APH_0732"/>
</dbReference>
<dbReference type="KEGG" id="aph:APH_0732"/>
<dbReference type="eggNOG" id="COG0649">
    <property type="taxonomic scope" value="Bacteria"/>
</dbReference>
<dbReference type="HOGENOM" id="CLU_015134_1_2_5"/>
<dbReference type="Proteomes" id="UP000001943">
    <property type="component" value="Chromosome"/>
</dbReference>
<dbReference type="GO" id="GO:0005886">
    <property type="term" value="C:plasma membrane"/>
    <property type="evidence" value="ECO:0007669"/>
    <property type="project" value="UniProtKB-SubCell"/>
</dbReference>
<dbReference type="GO" id="GO:0051287">
    <property type="term" value="F:NAD binding"/>
    <property type="evidence" value="ECO:0007669"/>
    <property type="project" value="InterPro"/>
</dbReference>
<dbReference type="GO" id="GO:0050136">
    <property type="term" value="F:NADH:ubiquinone reductase (non-electrogenic) activity"/>
    <property type="evidence" value="ECO:0007669"/>
    <property type="project" value="UniProtKB-UniRule"/>
</dbReference>
<dbReference type="GO" id="GO:0048038">
    <property type="term" value="F:quinone binding"/>
    <property type="evidence" value="ECO:0007669"/>
    <property type="project" value="UniProtKB-KW"/>
</dbReference>
<dbReference type="FunFam" id="1.10.645.10:FF:000005">
    <property type="entry name" value="NADH-quinone oxidoreductase subunit D"/>
    <property type="match status" value="1"/>
</dbReference>
<dbReference type="Gene3D" id="1.10.645.10">
    <property type="entry name" value="Cytochrome-c3 Hydrogenase, chain B"/>
    <property type="match status" value="1"/>
</dbReference>
<dbReference type="HAMAP" id="MF_01358">
    <property type="entry name" value="NDH1_NuoD"/>
    <property type="match status" value="1"/>
</dbReference>
<dbReference type="InterPro" id="IPR001135">
    <property type="entry name" value="NADH_Q_OxRdtase_suD"/>
</dbReference>
<dbReference type="InterPro" id="IPR014029">
    <property type="entry name" value="NADH_UbQ_OxRdtase_49kDa_CS"/>
</dbReference>
<dbReference type="InterPro" id="IPR022885">
    <property type="entry name" value="NDH1_su_D/H"/>
</dbReference>
<dbReference type="InterPro" id="IPR029014">
    <property type="entry name" value="NiFe-Hase_large"/>
</dbReference>
<dbReference type="NCBIfam" id="TIGR01962">
    <property type="entry name" value="NuoD"/>
    <property type="match status" value="1"/>
</dbReference>
<dbReference type="NCBIfam" id="NF004739">
    <property type="entry name" value="PRK06075.1"/>
    <property type="match status" value="1"/>
</dbReference>
<dbReference type="PANTHER" id="PTHR11993:SF10">
    <property type="entry name" value="NADH DEHYDROGENASE [UBIQUINONE] IRON-SULFUR PROTEIN 2, MITOCHONDRIAL"/>
    <property type="match status" value="1"/>
</dbReference>
<dbReference type="PANTHER" id="PTHR11993">
    <property type="entry name" value="NADH-UBIQUINONE OXIDOREDUCTASE 49 KDA SUBUNIT"/>
    <property type="match status" value="1"/>
</dbReference>
<dbReference type="Pfam" id="PF00346">
    <property type="entry name" value="Complex1_49kDa"/>
    <property type="match status" value="1"/>
</dbReference>
<dbReference type="SUPFAM" id="SSF56762">
    <property type="entry name" value="HydB/Nqo4-like"/>
    <property type="match status" value="1"/>
</dbReference>
<dbReference type="PROSITE" id="PS00535">
    <property type="entry name" value="COMPLEX1_49K"/>
    <property type="match status" value="1"/>
</dbReference>
<sequence>MSDSSDGYAKPMTINFGPQHPAAHGVMRLILEMSGEVIERIDPHIGLLHRGTEKLIEYKTYLQALPYFDRLDYVSPMSQEHAYSLCVERLLGCEVPIRAKYLRVIFCELTRLLNHLLNVACQALDSGATTPLLWIFEEREKILSFYERASGARFHSAYIRPGGLAADVPDGLLDDIHEFTNYFPKLLDSVDDLLTENSIWKQRNVEIGKVTKQQALDWGFSGPMLRACGIPWDLRKSQPYEIYDILDFKVPVGSNGDCYDRYLVRMAEIRESLYILEQCLRDIPSGPVKTDDRKIAPPKREELKYSMEALIHHFKLFSEGYKVPEGEAYAAVEAPKGEFGVYIVSDGTNKPYRCRIRSPGFAHLQAIDAMARGHMLADLPVIIGSLDIVFGEIDR</sequence>
<feature type="chain" id="PRO_0000357759" description="NADH-quinone oxidoreductase subunit D">
    <location>
        <begin position="1"/>
        <end position="395"/>
    </location>
</feature>
<protein>
    <recommendedName>
        <fullName evidence="1">NADH-quinone oxidoreductase subunit D</fullName>
        <ecNumber evidence="1">7.1.1.-</ecNumber>
    </recommendedName>
    <alternativeName>
        <fullName evidence="1">NADH dehydrogenase I subunit D</fullName>
    </alternativeName>
    <alternativeName>
        <fullName evidence="1">NDH-1 subunit D</fullName>
    </alternativeName>
</protein>
<name>NUOD_ANAPZ</name>
<comment type="function">
    <text evidence="1">NDH-1 shuttles electrons from NADH, via FMN and iron-sulfur (Fe-S) centers, to quinones in the respiratory chain. The immediate electron acceptor for the enzyme in this species is believed to be ubiquinone. Couples the redox reaction to proton translocation (for every two electrons transferred, four hydrogen ions are translocated across the cytoplasmic membrane), and thus conserves the redox energy in a proton gradient.</text>
</comment>
<comment type="catalytic activity">
    <reaction evidence="1">
        <text>a quinone + NADH + 5 H(+)(in) = a quinol + NAD(+) + 4 H(+)(out)</text>
        <dbReference type="Rhea" id="RHEA:57888"/>
        <dbReference type="ChEBI" id="CHEBI:15378"/>
        <dbReference type="ChEBI" id="CHEBI:24646"/>
        <dbReference type="ChEBI" id="CHEBI:57540"/>
        <dbReference type="ChEBI" id="CHEBI:57945"/>
        <dbReference type="ChEBI" id="CHEBI:132124"/>
    </reaction>
</comment>
<comment type="subunit">
    <text evidence="1">NDH-1 is composed of 14 different subunits. Subunits NuoB, C, D, E, F, and G constitute the peripheral sector of the complex.</text>
</comment>
<comment type="subcellular location">
    <subcellularLocation>
        <location evidence="1">Cell inner membrane</location>
        <topology evidence="1">Peripheral membrane protein</topology>
        <orientation evidence="1">Cytoplasmic side</orientation>
    </subcellularLocation>
</comment>
<comment type="similarity">
    <text evidence="1">Belongs to the complex I 49 kDa subunit family.</text>
</comment>
<organism>
    <name type="scientific">Anaplasma phagocytophilum (strain HZ)</name>
    <dbReference type="NCBI Taxonomy" id="212042"/>
    <lineage>
        <taxon>Bacteria</taxon>
        <taxon>Pseudomonadati</taxon>
        <taxon>Pseudomonadota</taxon>
        <taxon>Alphaproteobacteria</taxon>
        <taxon>Rickettsiales</taxon>
        <taxon>Anaplasmataceae</taxon>
        <taxon>Anaplasma</taxon>
        <taxon>phagocytophilum group</taxon>
    </lineage>
</organism>
<proteinExistence type="inferred from homology"/>
<evidence type="ECO:0000255" key="1">
    <source>
        <dbReference type="HAMAP-Rule" id="MF_01358"/>
    </source>
</evidence>